<gene>
    <name evidence="1" type="primary">clpX</name>
    <name type="ordered locus">AHA_2012</name>
</gene>
<reference key="1">
    <citation type="journal article" date="2006" name="J. Bacteriol.">
        <title>Genome sequence of Aeromonas hydrophila ATCC 7966T: jack of all trades.</title>
        <authorList>
            <person name="Seshadri R."/>
            <person name="Joseph S.W."/>
            <person name="Chopra A.K."/>
            <person name="Sha J."/>
            <person name="Shaw J."/>
            <person name="Graf J."/>
            <person name="Haft D.H."/>
            <person name="Wu M."/>
            <person name="Ren Q."/>
            <person name="Rosovitz M.J."/>
            <person name="Madupu R."/>
            <person name="Tallon L."/>
            <person name="Kim M."/>
            <person name="Jin S."/>
            <person name="Vuong H."/>
            <person name="Stine O.C."/>
            <person name="Ali A."/>
            <person name="Horneman A.J."/>
            <person name="Heidelberg J.F."/>
        </authorList>
    </citation>
    <scope>NUCLEOTIDE SEQUENCE [LARGE SCALE GENOMIC DNA]</scope>
    <source>
        <strain>ATCC 7966 / DSM 30187 / BCRC 13018 / CCUG 14551 / JCM 1027 / KCTC 2358 / NCIMB 9240 / NCTC 8049</strain>
    </source>
</reference>
<sequence>MTEKRKGEGDKLLYCSFCGKSQHEVRKLIAGPSVYICDECVELCNDIIREEIREISPKRDGSELPTPHEIRAHLDDYVIGQEYAKKVLAVAVYNHYKRLRSGSESGGVELGKSNILLIGPTGSGKTLLAETLARLLDVPFTMADATTLTEAGYVGEDVENIIQKLLQKCDYDVEKAQRGIVYIDEIDKISRKSDNPSITRDVSGEGVQQALLKLIEGTIASVPPQGGRKHPQQEFLQVDTSKILFICGGAFAGLDKVIEQRSVKGTGIGFGAEVKSKSAKATLSESFAKVEPEDLIKYGLIPEFIGRLPVVATLTELDEAALIQILKEPKNALTKQYAALFDLEGVELEFRDDALNAIARKAMERKTGARGLRSIVEAVLLDTMYDLPSLDGVSKVVIDETVIKGDSAPLMIYENPETQAAASE</sequence>
<keyword id="KW-0067">ATP-binding</keyword>
<keyword id="KW-0143">Chaperone</keyword>
<keyword id="KW-0479">Metal-binding</keyword>
<keyword id="KW-0547">Nucleotide-binding</keyword>
<keyword id="KW-1185">Reference proteome</keyword>
<keyword id="KW-0862">Zinc</keyword>
<comment type="function">
    <text evidence="1">ATP-dependent specificity component of the Clp protease. It directs the protease to specific substrates. Can perform chaperone functions in the absence of ClpP.</text>
</comment>
<comment type="subunit">
    <text evidence="1">Component of the ClpX-ClpP complex. Forms a hexameric ring that, in the presence of ATP, binds to fourteen ClpP subunits assembled into a disk-like structure with a central cavity, resembling the structure of eukaryotic proteasomes.</text>
</comment>
<comment type="similarity">
    <text evidence="1">Belongs to the ClpX chaperone family.</text>
</comment>
<accession>A0KJU2</accession>
<organism>
    <name type="scientific">Aeromonas hydrophila subsp. hydrophila (strain ATCC 7966 / DSM 30187 / BCRC 13018 / CCUG 14551 / JCM 1027 / KCTC 2358 / NCIMB 9240 / NCTC 8049)</name>
    <dbReference type="NCBI Taxonomy" id="380703"/>
    <lineage>
        <taxon>Bacteria</taxon>
        <taxon>Pseudomonadati</taxon>
        <taxon>Pseudomonadota</taxon>
        <taxon>Gammaproteobacteria</taxon>
        <taxon>Aeromonadales</taxon>
        <taxon>Aeromonadaceae</taxon>
        <taxon>Aeromonas</taxon>
    </lineage>
</organism>
<name>CLPX_AERHH</name>
<dbReference type="EMBL" id="CP000462">
    <property type="protein sequence ID" value="ABK38692.1"/>
    <property type="molecule type" value="Genomic_DNA"/>
</dbReference>
<dbReference type="RefSeq" id="WP_005301524.1">
    <property type="nucleotide sequence ID" value="NC_008570.1"/>
</dbReference>
<dbReference type="RefSeq" id="YP_856543.1">
    <property type="nucleotide sequence ID" value="NC_008570.1"/>
</dbReference>
<dbReference type="SMR" id="A0KJU2"/>
<dbReference type="STRING" id="380703.AHA_2012"/>
<dbReference type="EnsemblBacteria" id="ABK38692">
    <property type="protein sequence ID" value="ABK38692"/>
    <property type="gene ID" value="AHA_2012"/>
</dbReference>
<dbReference type="GeneID" id="47845273"/>
<dbReference type="KEGG" id="aha:AHA_2012"/>
<dbReference type="PATRIC" id="fig|380703.7.peg.2033"/>
<dbReference type="eggNOG" id="COG1219">
    <property type="taxonomic scope" value="Bacteria"/>
</dbReference>
<dbReference type="HOGENOM" id="CLU_014218_8_2_6"/>
<dbReference type="OrthoDB" id="9804062at2"/>
<dbReference type="PRO" id="PR:A0KJU2"/>
<dbReference type="Proteomes" id="UP000000756">
    <property type="component" value="Chromosome"/>
</dbReference>
<dbReference type="GO" id="GO:0009376">
    <property type="term" value="C:HslUV protease complex"/>
    <property type="evidence" value="ECO:0007669"/>
    <property type="project" value="TreeGrafter"/>
</dbReference>
<dbReference type="GO" id="GO:0005524">
    <property type="term" value="F:ATP binding"/>
    <property type="evidence" value="ECO:0007669"/>
    <property type="project" value="UniProtKB-UniRule"/>
</dbReference>
<dbReference type="GO" id="GO:0016887">
    <property type="term" value="F:ATP hydrolysis activity"/>
    <property type="evidence" value="ECO:0007669"/>
    <property type="project" value="InterPro"/>
</dbReference>
<dbReference type="GO" id="GO:0140662">
    <property type="term" value="F:ATP-dependent protein folding chaperone"/>
    <property type="evidence" value="ECO:0007669"/>
    <property type="project" value="InterPro"/>
</dbReference>
<dbReference type="GO" id="GO:0046983">
    <property type="term" value="F:protein dimerization activity"/>
    <property type="evidence" value="ECO:0007669"/>
    <property type="project" value="InterPro"/>
</dbReference>
<dbReference type="GO" id="GO:0051082">
    <property type="term" value="F:unfolded protein binding"/>
    <property type="evidence" value="ECO:0007669"/>
    <property type="project" value="UniProtKB-UniRule"/>
</dbReference>
<dbReference type="GO" id="GO:0008270">
    <property type="term" value="F:zinc ion binding"/>
    <property type="evidence" value="ECO:0007669"/>
    <property type="project" value="InterPro"/>
</dbReference>
<dbReference type="GO" id="GO:0051301">
    <property type="term" value="P:cell division"/>
    <property type="evidence" value="ECO:0007669"/>
    <property type="project" value="TreeGrafter"/>
</dbReference>
<dbReference type="GO" id="GO:0051603">
    <property type="term" value="P:proteolysis involved in protein catabolic process"/>
    <property type="evidence" value="ECO:0007669"/>
    <property type="project" value="TreeGrafter"/>
</dbReference>
<dbReference type="CDD" id="cd19497">
    <property type="entry name" value="RecA-like_ClpX"/>
    <property type="match status" value="1"/>
</dbReference>
<dbReference type="FunFam" id="1.10.8.60:FF:000002">
    <property type="entry name" value="ATP-dependent Clp protease ATP-binding subunit ClpX"/>
    <property type="match status" value="1"/>
</dbReference>
<dbReference type="FunFam" id="3.40.50.300:FF:000005">
    <property type="entry name" value="ATP-dependent Clp protease ATP-binding subunit ClpX"/>
    <property type="match status" value="1"/>
</dbReference>
<dbReference type="Gene3D" id="1.10.8.60">
    <property type="match status" value="1"/>
</dbReference>
<dbReference type="Gene3D" id="6.20.220.10">
    <property type="entry name" value="ClpX chaperone, C4-type zinc finger domain"/>
    <property type="match status" value="1"/>
</dbReference>
<dbReference type="Gene3D" id="3.40.50.300">
    <property type="entry name" value="P-loop containing nucleotide triphosphate hydrolases"/>
    <property type="match status" value="1"/>
</dbReference>
<dbReference type="HAMAP" id="MF_00175">
    <property type="entry name" value="ClpX"/>
    <property type="match status" value="1"/>
</dbReference>
<dbReference type="InterPro" id="IPR003593">
    <property type="entry name" value="AAA+_ATPase"/>
</dbReference>
<dbReference type="InterPro" id="IPR050052">
    <property type="entry name" value="ATP-dep_Clp_protease_ClpX"/>
</dbReference>
<dbReference type="InterPro" id="IPR003959">
    <property type="entry name" value="ATPase_AAA_core"/>
</dbReference>
<dbReference type="InterPro" id="IPR019489">
    <property type="entry name" value="Clp_ATPase_C"/>
</dbReference>
<dbReference type="InterPro" id="IPR004487">
    <property type="entry name" value="Clp_protease_ATP-bd_su_ClpX"/>
</dbReference>
<dbReference type="InterPro" id="IPR046425">
    <property type="entry name" value="ClpX_bact"/>
</dbReference>
<dbReference type="InterPro" id="IPR027417">
    <property type="entry name" value="P-loop_NTPase"/>
</dbReference>
<dbReference type="InterPro" id="IPR010603">
    <property type="entry name" value="Znf_CppX_C4"/>
</dbReference>
<dbReference type="InterPro" id="IPR038366">
    <property type="entry name" value="Znf_CppX_C4_sf"/>
</dbReference>
<dbReference type="NCBIfam" id="TIGR00382">
    <property type="entry name" value="clpX"/>
    <property type="match status" value="1"/>
</dbReference>
<dbReference type="NCBIfam" id="NF003745">
    <property type="entry name" value="PRK05342.1"/>
    <property type="match status" value="1"/>
</dbReference>
<dbReference type="PANTHER" id="PTHR48102:SF7">
    <property type="entry name" value="ATP-DEPENDENT CLP PROTEASE ATP-BINDING SUBUNIT CLPX-LIKE, MITOCHONDRIAL"/>
    <property type="match status" value="1"/>
</dbReference>
<dbReference type="PANTHER" id="PTHR48102">
    <property type="entry name" value="ATP-DEPENDENT CLP PROTEASE ATP-BINDING SUBUNIT CLPX-LIKE, MITOCHONDRIAL-RELATED"/>
    <property type="match status" value="1"/>
</dbReference>
<dbReference type="Pfam" id="PF07724">
    <property type="entry name" value="AAA_2"/>
    <property type="match status" value="1"/>
</dbReference>
<dbReference type="Pfam" id="PF10431">
    <property type="entry name" value="ClpB_D2-small"/>
    <property type="match status" value="1"/>
</dbReference>
<dbReference type="Pfam" id="PF06689">
    <property type="entry name" value="zf-C4_ClpX"/>
    <property type="match status" value="1"/>
</dbReference>
<dbReference type="SMART" id="SM00382">
    <property type="entry name" value="AAA"/>
    <property type="match status" value="1"/>
</dbReference>
<dbReference type="SMART" id="SM01086">
    <property type="entry name" value="ClpB_D2-small"/>
    <property type="match status" value="1"/>
</dbReference>
<dbReference type="SMART" id="SM00994">
    <property type="entry name" value="zf-C4_ClpX"/>
    <property type="match status" value="1"/>
</dbReference>
<dbReference type="SUPFAM" id="SSF57716">
    <property type="entry name" value="Glucocorticoid receptor-like (DNA-binding domain)"/>
    <property type="match status" value="1"/>
</dbReference>
<dbReference type="SUPFAM" id="SSF52540">
    <property type="entry name" value="P-loop containing nucleoside triphosphate hydrolases"/>
    <property type="match status" value="1"/>
</dbReference>
<dbReference type="PROSITE" id="PS51902">
    <property type="entry name" value="CLPX_ZB"/>
    <property type="match status" value="1"/>
</dbReference>
<evidence type="ECO:0000255" key="1">
    <source>
        <dbReference type="HAMAP-Rule" id="MF_00175"/>
    </source>
</evidence>
<evidence type="ECO:0000255" key="2">
    <source>
        <dbReference type="PROSITE-ProRule" id="PRU01250"/>
    </source>
</evidence>
<feature type="chain" id="PRO_1000189676" description="ATP-dependent Clp protease ATP-binding subunit ClpX">
    <location>
        <begin position="1"/>
        <end position="424"/>
    </location>
</feature>
<feature type="domain" description="ClpX-type ZB" evidence="2">
    <location>
        <begin position="3"/>
        <end position="56"/>
    </location>
</feature>
<feature type="binding site" evidence="2">
    <location>
        <position position="15"/>
    </location>
    <ligand>
        <name>Zn(2+)</name>
        <dbReference type="ChEBI" id="CHEBI:29105"/>
    </ligand>
</feature>
<feature type="binding site" evidence="2">
    <location>
        <position position="18"/>
    </location>
    <ligand>
        <name>Zn(2+)</name>
        <dbReference type="ChEBI" id="CHEBI:29105"/>
    </ligand>
</feature>
<feature type="binding site" evidence="2">
    <location>
        <position position="37"/>
    </location>
    <ligand>
        <name>Zn(2+)</name>
        <dbReference type="ChEBI" id="CHEBI:29105"/>
    </ligand>
</feature>
<feature type="binding site" evidence="2">
    <location>
        <position position="40"/>
    </location>
    <ligand>
        <name>Zn(2+)</name>
        <dbReference type="ChEBI" id="CHEBI:29105"/>
    </ligand>
</feature>
<feature type="binding site" evidence="1">
    <location>
        <begin position="120"/>
        <end position="127"/>
    </location>
    <ligand>
        <name>ATP</name>
        <dbReference type="ChEBI" id="CHEBI:30616"/>
    </ligand>
</feature>
<protein>
    <recommendedName>
        <fullName evidence="1">ATP-dependent Clp protease ATP-binding subunit ClpX</fullName>
    </recommendedName>
</protein>
<proteinExistence type="inferred from homology"/>